<sequence length="329" mass="36271">MPDRVVRVAVTQAEPVWLDLQATIEKTCRLITEAASNNAQLVAFPETWIPGYPCWIWSRLVDFDLNVAYIKNSLRVDSPEMERLQACAREAGIAVSLGFSENSNNSLYISNVLIGSDGEIKVHRRKMKPTHMERTVFGDASGHCLQSVAQLPFGRVGSLSCWEHIQPLLKYNTITQNEEIHVAAWPPLNSEVGDEIPWSMTAEGCKTLSRTYAIESGTFVLHCTAVISESGINSLGTLGGALMSTPGGGHSTIFGPDGRRITDHIEETSEGIVYANLDMDELVVNKMFADCTGHYSRPDLLWLGVSQEIKPVVRPQRAEVDKGTNDQVE</sequence>
<comment type="function">
    <text evidence="3">Nitrilase that hydrolyzes preferentially phenylacetonitrile and heteroaromatic nitriles, but has significantly lower activity for (R,S)-mandelonitrile. Also acts on dinitriles like phenylenediacetonitriles (PDAs) 1,2-PDA, 1,3-PDA, and 1,4-PDA, and cyanophenyl acetonitriles (CPAs) 2-CPA and 4-CPA.</text>
</comment>
<comment type="catalytic activity">
    <reaction evidence="1">
        <text>a nitrile + 2 H2O = a carboxylate + NH4(+)</text>
        <dbReference type="Rhea" id="RHEA:21724"/>
        <dbReference type="ChEBI" id="CHEBI:15377"/>
        <dbReference type="ChEBI" id="CHEBI:18379"/>
        <dbReference type="ChEBI" id="CHEBI:28938"/>
        <dbReference type="ChEBI" id="CHEBI:29067"/>
        <dbReference type="EC" id="3.5.5.1"/>
    </reaction>
</comment>
<comment type="catalytic activity">
    <reaction evidence="1">
        <text>4-chlorophenylacetonitrile + 2 H2O = 4-chlorophenylacetate + NH4(+)</text>
        <dbReference type="Rhea" id="RHEA:20657"/>
        <dbReference type="ChEBI" id="CHEBI:15377"/>
        <dbReference type="ChEBI" id="CHEBI:16237"/>
        <dbReference type="ChEBI" id="CHEBI:17346"/>
        <dbReference type="ChEBI" id="CHEBI:28938"/>
        <dbReference type="EC" id="3.5.5.5"/>
    </reaction>
</comment>
<comment type="similarity">
    <text evidence="5">Belongs to the carbon-nitrogen hydrolase superfamily. Nitrilase family.</text>
</comment>
<reference key="1">
    <citation type="journal article" date="2016" name="Appl. Microbiol. Biotechnol.">
        <title>Bringing nitrilase sequences from databases to life: the search for novel substrate specificities with a focus on dinitriles.</title>
        <authorList>
            <person name="Vesela A.B."/>
            <person name="Rucka L."/>
            <person name="Kaplan O."/>
            <person name="Pelantova H."/>
            <person name="Nesvera J."/>
            <person name="Patek M."/>
            <person name="Martinkova L."/>
        </authorList>
    </citation>
    <scope>NUCLEOTIDE SEQUENCE [GENOMIC DNA]</scope>
    <scope>FUNCTION</scope>
    <scope>CATALYTIC ACTIVITY</scope>
</reference>
<reference key="2">
    <citation type="journal article" date="2011" name="Genome Biol.">
        <title>Comparative genome sequence analysis underscores mycoparasitism as the ancestral life style of Trichoderma.</title>
        <authorList>
            <person name="Kubicek C.P."/>
            <person name="Herrera-Estrella A."/>
            <person name="Seidl-Seiboth V."/>
            <person name="Martinez D.A."/>
            <person name="Druzhinina I.S."/>
            <person name="Thon M."/>
            <person name="Zeilinger S."/>
            <person name="Casas-Flores S."/>
            <person name="Horwitz B.A."/>
            <person name="Mukherjee P.K."/>
            <person name="Mukherjee M."/>
            <person name="Kredics L."/>
            <person name="Alcaraz L.D."/>
            <person name="Aerts A."/>
            <person name="Antal Z."/>
            <person name="Atanasova L."/>
            <person name="Cervantes-Badillo M.G."/>
            <person name="Challacombe J."/>
            <person name="Chertkov O."/>
            <person name="McCluskey K."/>
            <person name="Coulpier F."/>
            <person name="Deshpande N."/>
            <person name="von Doehren H."/>
            <person name="Ebbole D.J."/>
            <person name="Esquivel-Naranjo E.U."/>
            <person name="Fekete E."/>
            <person name="Flipphi M."/>
            <person name="Glaser F."/>
            <person name="Gomez-Rodriguez E.Y."/>
            <person name="Gruber S."/>
            <person name="Han C."/>
            <person name="Henrissat B."/>
            <person name="Hermosa R."/>
            <person name="Hernandez-Onate M."/>
            <person name="Karaffa L."/>
            <person name="Kosti I."/>
            <person name="Le Crom S."/>
            <person name="Lindquist E."/>
            <person name="Lucas S."/>
            <person name="Luebeck M."/>
            <person name="Luebeck P.S."/>
            <person name="Margeot A."/>
            <person name="Metz B."/>
            <person name="Misra M."/>
            <person name="Nevalainen H."/>
            <person name="Omann M."/>
            <person name="Packer N."/>
            <person name="Perrone G."/>
            <person name="Uresti-Rivera E.E."/>
            <person name="Salamov A."/>
            <person name="Schmoll M."/>
            <person name="Seiboth B."/>
            <person name="Shapiro H."/>
            <person name="Sukno S."/>
            <person name="Tamayo-Ramos J.A."/>
            <person name="Tisch D."/>
            <person name="Wiest A."/>
            <person name="Wilkinson H.H."/>
            <person name="Zhang M."/>
            <person name="Coutinho P.M."/>
            <person name="Kenerley C.M."/>
            <person name="Monte E."/>
            <person name="Baker S.E."/>
            <person name="Grigoriev I.V."/>
        </authorList>
    </citation>
    <scope>NUCLEOTIDE SEQUENCE [LARGE SCALE GENOMIC DNA]</scope>
    <source>
        <strain>Gv29-8 / FGSC 10586</strain>
    </source>
</reference>
<dbReference type="EC" id="3.5.5.1" evidence="1"/>
<dbReference type="EC" id="3.5.5.5" evidence="1"/>
<dbReference type="EMBL" id="LN875498">
    <property type="protein sequence ID" value="CTQ87322.1"/>
    <property type="molecule type" value="Genomic_DNA"/>
</dbReference>
<dbReference type="EMBL" id="ABDF02000086">
    <property type="protein sequence ID" value="EHK18468.1"/>
    <property type="molecule type" value="Genomic_DNA"/>
</dbReference>
<dbReference type="RefSeq" id="XP_013952666.1">
    <property type="nucleotide sequence ID" value="XM_014097191.1"/>
</dbReference>
<dbReference type="SMR" id="G9N4E3"/>
<dbReference type="STRING" id="413071.G9N4E3"/>
<dbReference type="EnsemblFungi" id="EHK18468">
    <property type="protein sequence ID" value="EHK18468"/>
    <property type="gene ID" value="TRIVIDRAFT_77162"/>
</dbReference>
<dbReference type="GeneID" id="25797893"/>
<dbReference type="VEuPathDB" id="FungiDB:TRIVIDRAFT_77162"/>
<dbReference type="eggNOG" id="KOG0805">
    <property type="taxonomic scope" value="Eukaryota"/>
</dbReference>
<dbReference type="HOGENOM" id="CLU_030130_6_0_1"/>
<dbReference type="InParanoid" id="G9N4E3"/>
<dbReference type="OMA" id="GYPCWIW"/>
<dbReference type="OrthoDB" id="10250282at2759"/>
<dbReference type="BRENDA" id="3.5.5.5">
    <property type="organism ID" value="17448"/>
</dbReference>
<dbReference type="Proteomes" id="UP000007115">
    <property type="component" value="Unassembled WGS sequence"/>
</dbReference>
<dbReference type="GO" id="GO:0047428">
    <property type="term" value="F:arylacetonitrilase activity"/>
    <property type="evidence" value="ECO:0007669"/>
    <property type="project" value="UniProtKB-EC"/>
</dbReference>
<dbReference type="CDD" id="cd07564">
    <property type="entry name" value="nitrilases_CHs"/>
    <property type="match status" value="1"/>
</dbReference>
<dbReference type="FunFam" id="3.60.110.10:FF:000011">
    <property type="entry name" value="Cyanide hydratase"/>
    <property type="match status" value="1"/>
</dbReference>
<dbReference type="Gene3D" id="3.60.110.10">
    <property type="entry name" value="Carbon-nitrogen hydrolase"/>
    <property type="match status" value="1"/>
</dbReference>
<dbReference type="InterPro" id="IPR003010">
    <property type="entry name" value="C-N_Hydrolase"/>
</dbReference>
<dbReference type="InterPro" id="IPR036526">
    <property type="entry name" value="C-N_Hydrolase_sf"/>
</dbReference>
<dbReference type="InterPro" id="IPR044149">
    <property type="entry name" value="Nitrilases_CHs"/>
</dbReference>
<dbReference type="PANTHER" id="PTHR46044:SF14">
    <property type="entry name" value="ARYLACETONITRILASE"/>
    <property type="match status" value="1"/>
</dbReference>
<dbReference type="PANTHER" id="PTHR46044">
    <property type="entry name" value="NITRILASE"/>
    <property type="match status" value="1"/>
</dbReference>
<dbReference type="Pfam" id="PF00795">
    <property type="entry name" value="CN_hydrolase"/>
    <property type="match status" value="1"/>
</dbReference>
<dbReference type="SUPFAM" id="SSF56317">
    <property type="entry name" value="Carbon-nitrogen hydrolase"/>
    <property type="match status" value="1"/>
</dbReference>
<dbReference type="PROSITE" id="PS50263">
    <property type="entry name" value="CN_HYDROLASE"/>
    <property type="match status" value="1"/>
</dbReference>
<proteinExistence type="evidence at protein level"/>
<protein>
    <recommendedName>
        <fullName evidence="4">Arylacetonitrilase</fullName>
        <ecNumber evidence="1">3.5.5.1</ecNumber>
        <ecNumber evidence="1">3.5.5.5</ecNumber>
    </recommendedName>
    <alternativeName>
        <fullName evidence="4">NitTv</fullName>
    </alternativeName>
</protein>
<organism>
    <name type="scientific">Hypocrea virens (strain Gv29-8 / FGSC 10586)</name>
    <name type="common">Gliocladium virens</name>
    <name type="synonym">Trichoderma virens</name>
    <dbReference type="NCBI Taxonomy" id="413071"/>
    <lineage>
        <taxon>Eukaryota</taxon>
        <taxon>Fungi</taxon>
        <taxon>Dikarya</taxon>
        <taxon>Ascomycota</taxon>
        <taxon>Pezizomycotina</taxon>
        <taxon>Sordariomycetes</taxon>
        <taxon>Hypocreomycetidae</taxon>
        <taxon>Hypocreales</taxon>
        <taxon>Hypocreaceae</taxon>
        <taxon>Trichoderma</taxon>
    </lineage>
</organism>
<accession>G9N4E3</accession>
<accession>A0A0P1DJB0</accession>
<gene>
    <name type="ORF">TRIVIDRAFT_77162</name>
</gene>
<evidence type="ECO:0000250" key="1">
    <source>
        <dbReference type="UniProtKB" id="C7YS90"/>
    </source>
</evidence>
<evidence type="ECO:0000255" key="2">
    <source>
        <dbReference type="PROSITE-ProRule" id="PRU00054"/>
    </source>
</evidence>
<evidence type="ECO:0000269" key="3">
    <source>
    </source>
</evidence>
<evidence type="ECO:0000303" key="4">
    <source>
    </source>
</evidence>
<evidence type="ECO:0000305" key="5"/>
<feature type="chain" id="PRO_0000451137" description="Arylacetonitrilase">
    <location>
        <begin position="1"/>
        <end position="329"/>
    </location>
</feature>
<feature type="domain" description="CN hydrolase" evidence="2">
    <location>
        <begin position="6"/>
        <end position="279"/>
    </location>
</feature>
<feature type="active site" description="Proton acceptor" evidence="2">
    <location>
        <position position="46"/>
    </location>
</feature>
<feature type="active site" evidence="2">
    <location>
        <position position="126"/>
    </location>
</feature>
<feature type="active site" description="Nucleophile" evidence="2">
    <location>
        <position position="161"/>
    </location>
</feature>
<keyword id="KW-0378">Hydrolase</keyword>
<keyword id="KW-1185">Reference proteome</keyword>
<name>NIT_HYPVG</name>